<proteinExistence type="inferred from homology"/>
<comment type="function">
    <text evidence="1">This enzyme is involved in nucleotide metabolism: it produces dUMP, the immediate precursor of thymidine nucleotides and it decreases the intracellular concentration of dUTP so that uracil cannot be incorporated into DNA.</text>
</comment>
<comment type="catalytic activity">
    <reaction evidence="1">
        <text>dUTP + H2O = dUMP + diphosphate + H(+)</text>
        <dbReference type="Rhea" id="RHEA:10248"/>
        <dbReference type="ChEBI" id="CHEBI:15377"/>
        <dbReference type="ChEBI" id="CHEBI:15378"/>
        <dbReference type="ChEBI" id="CHEBI:33019"/>
        <dbReference type="ChEBI" id="CHEBI:61555"/>
        <dbReference type="ChEBI" id="CHEBI:246422"/>
        <dbReference type="EC" id="3.6.1.23"/>
    </reaction>
</comment>
<comment type="cofactor">
    <cofactor evidence="1">
        <name>Mg(2+)</name>
        <dbReference type="ChEBI" id="CHEBI:18420"/>
    </cofactor>
</comment>
<comment type="pathway">
    <text evidence="1">Pyrimidine metabolism; dUMP biosynthesis; dUMP from dCTP (dUTP route): step 2/2.</text>
</comment>
<comment type="similarity">
    <text evidence="1">Belongs to the dUTPase family.</text>
</comment>
<comment type="sequence caution" evidence="2">
    <conflict type="erroneous termination">
        <sequence resource="EMBL-CDS" id="AAD21551"/>
    </conflict>
    <text>Truncated C-terminus.</text>
</comment>
<protein>
    <recommendedName>
        <fullName evidence="1">Deoxyuridine 5'-triphosphate nucleotidohydrolase</fullName>
        <shortName evidence="1">dUTPase</shortName>
        <ecNumber evidence="1">3.6.1.23</ecNumber>
    </recommendedName>
    <alternativeName>
        <fullName evidence="1">dUTP pyrophosphatase</fullName>
    </alternativeName>
</protein>
<gene>
    <name evidence="1" type="primary">dut</name>
    <name type="ordered locus">ZMO1191</name>
</gene>
<accession>Q9X3X5</accession>
<accession>Q5NN95</accession>
<sequence>MKIKLEIKRLPHGANLPFPSYASEGAAGMDVVSAEDVILQPMQRYPVKTGFAVAIPNGYEIQVRARSGLALKHGIACPNAPGTIDSDYRGEVKILLINLGSEAFEIKRGDRIAQLILASVTQAVFCEVTDLDDTQRGHNGFGSTGI</sequence>
<feature type="chain" id="PRO_0000182925" description="Deoxyuridine 5'-triphosphate nucleotidohydrolase">
    <location>
        <begin position="1"/>
        <end position="146"/>
    </location>
</feature>
<feature type="binding site" evidence="1">
    <location>
        <begin position="66"/>
        <end position="68"/>
    </location>
    <ligand>
        <name>substrate</name>
    </ligand>
</feature>
<feature type="binding site" evidence="1">
    <location>
        <position position="79"/>
    </location>
    <ligand>
        <name>substrate</name>
    </ligand>
</feature>
<feature type="binding site" evidence="1">
    <location>
        <begin position="83"/>
        <end position="85"/>
    </location>
    <ligand>
        <name>substrate</name>
    </ligand>
</feature>
<feature type="binding site" evidence="1">
    <location>
        <position position="93"/>
    </location>
    <ligand>
        <name>substrate</name>
    </ligand>
</feature>
<name>DUT_ZYMMO</name>
<dbReference type="EC" id="3.6.1.23" evidence="1"/>
<dbReference type="EMBL" id="AF088896">
    <property type="protein sequence ID" value="AAD21551.1"/>
    <property type="status" value="ALT_SEQ"/>
    <property type="molecule type" value="Genomic_DNA"/>
</dbReference>
<dbReference type="EMBL" id="AE008692">
    <property type="protein sequence ID" value="AAV89815.1"/>
    <property type="molecule type" value="Genomic_DNA"/>
</dbReference>
<dbReference type="RefSeq" id="WP_011241014.1">
    <property type="nucleotide sequence ID" value="NZ_CP035711.1"/>
</dbReference>
<dbReference type="SMR" id="Q9X3X5"/>
<dbReference type="STRING" id="264203.ZMO1191"/>
<dbReference type="KEGG" id="zmo:ZMO1191"/>
<dbReference type="eggNOG" id="COG0756">
    <property type="taxonomic scope" value="Bacteria"/>
</dbReference>
<dbReference type="HOGENOM" id="CLU_068508_1_2_5"/>
<dbReference type="UniPathway" id="UPA00610">
    <property type="reaction ID" value="UER00666"/>
</dbReference>
<dbReference type="Proteomes" id="UP000001173">
    <property type="component" value="Chromosome"/>
</dbReference>
<dbReference type="GO" id="GO:0004170">
    <property type="term" value="F:dUTP diphosphatase activity"/>
    <property type="evidence" value="ECO:0007669"/>
    <property type="project" value="UniProtKB-UniRule"/>
</dbReference>
<dbReference type="GO" id="GO:0000287">
    <property type="term" value="F:magnesium ion binding"/>
    <property type="evidence" value="ECO:0007669"/>
    <property type="project" value="UniProtKB-UniRule"/>
</dbReference>
<dbReference type="GO" id="GO:0006226">
    <property type="term" value="P:dUMP biosynthetic process"/>
    <property type="evidence" value="ECO:0007669"/>
    <property type="project" value="UniProtKB-UniRule"/>
</dbReference>
<dbReference type="GO" id="GO:0046081">
    <property type="term" value="P:dUTP catabolic process"/>
    <property type="evidence" value="ECO:0007669"/>
    <property type="project" value="InterPro"/>
</dbReference>
<dbReference type="CDD" id="cd07557">
    <property type="entry name" value="trimeric_dUTPase"/>
    <property type="match status" value="1"/>
</dbReference>
<dbReference type="Gene3D" id="2.70.40.10">
    <property type="match status" value="1"/>
</dbReference>
<dbReference type="HAMAP" id="MF_00116">
    <property type="entry name" value="dUTPase_bact"/>
    <property type="match status" value="1"/>
</dbReference>
<dbReference type="InterPro" id="IPR008181">
    <property type="entry name" value="dUTPase"/>
</dbReference>
<dbReference type="InterPro" id="IPR029054">
    <property type="entry name" value="dUTPase-like"/>
</dbReference>
<dbReference type="InterPro" id="IPR036157">
    <property type="entry name" value="dUTPase-like_sf"/>
</dbReference>
<dbReference type="InterPro" id="IPR033704">
    <property type="entry name" value="dUTPase_trimeric"/>
</dbReference>
<dbReference type="NCBIfam" id="TIGR00576">
    <property type="entry name" value="dut"/>
    <property type="match status" value="1"/>
</dbReference>
<dbReference type="NCBIfam" id="NF001862">
    <property type="entry name" value="PRK00601.1"/>
    <property type="match status" value="1"/>
</dbReference>
<dbReference type="PANTHER" id="PTHR11241">
    <property type="entry name" value="DEOXYURIDINE 5'-TRIPHOSPHATE NUCLEOTIDOHYDROLASE"/>
    <property type="match status" value="1"/>
</dbReference>
<dbReference type="PANTHER" id="PTHR11241:SF0">
    <property type="entry name" value="DEOXYURIDINE 5'-TRIPHOSPHATE NUCLEOTIDOHYDROLASE"/>
    <property type="match status" value="1"/>
</dbReference>
<dbReference type="Pfam" id="PF00692">
    <property type="entry name" value="dUTPase"/>
    <property type="match status" value="1"/>
</dbReference>
<dbReference type="SUPFAM" id="SSF51283">
    <property type="entry name" value="dUTPase-like"/>
    <property type="match status" value="1"/>
</dbReference>
<evidence type="ECO:0000255" key="1">
    <source>
        <dbReference type="HAMAP-Rule" id="MF_00116"/>
    </source>
</evidence>
<evidence type="ECO:0000305" key="2"/>
<reference key="1">
    <citation type="submission" date="1998-08" db="EMBL/GenBank/DDBJ databases">
        <authorList>
            <person name="Lee H.J."/>
            <person name="Kang H.S."/>
        </authorList>
    </citation>
    <scope>NUCLEOTIDE SEQUENCE [GENOMIC DNA]</scope>
    <source>
        <strain>ATCC 31821 / ZM4 / CP4</strain>
    </source>
</reference>
<reference key="2">
    <citation type="journal article" date="2005" name="Nat. Biotechnol.">
        <title>The genome sequence of the ethanologenic bacterium Zymomonas mobilis ZM4.</title>
        <authorList>
            <person name="Seo J.-S."/>
            <person name="Chong H."/>
            <person name="Park H.S."/>
            <person name="Yoon K.-O."/>
            <person name="Jung C."/>
            <person name="Kim J.J."/>
            <person name="Hong J.H."/>
            <person name="Kim H."/>
            <person name="Kim J.-H."/>
            <person name="Kil J.-I."/>
            <person name="Park C.J."/>
            <person name="Oh H.-M."/>
            <person name="Lee J.-S."/>
            <person name="Jin S.-J."/>
            <person name="Um H.-W."/>
            <person name="Lee H.-J."/>
            <person name="Oh S.-J."/>
            <person name="Kim J.Y."/>
            <person name="Kang H.L."/>
            <person name="Lee S.Y."/>
            <person name="Lee K.J."/>
            <person name="Kang H.S."/>
        </authorList>
    </citation>
    <scope>NUCLEOTIDE SEQUENCE [LARGE SCALE GENOMIC DNA]</scope>
    <source>
        <strain>ATCC 31821 / ZM4 / CP4</strain>
    </source>
</reference>
<organism>
    <name type="scientific">Zymomonas mobilis subsp. mobilis (strain ATCC 31821 / ZM4 / CP4)</name>
    <dbReference type="NCBI Taxonomy" id="264203"/>
    <lineage>
        <taxon>Bacteria</taxon>
        <taxon>Pseudomonadati</taxon>
        <taxon>Pseudomonadota</taxon>
        <taxon>Alphaproteobacteria</taxon>
        <taxon>Sphingomonadales</taxon>
        <taxon>Zymomonadaceae</taxon>
        <taxon>Zymomonas</taxon>
    </lineage>
</organism>
<keyword id="KW-0378">Hydrolase</keyword>
<keyword id="KW-0460">Magnesium</keyword>
<keyword id="KW-0479">Metal-binding</keyword>
<keyword id="KW-0546">Nucleotide metabolism</keyword>
<keyword id="KW-1185">Reference proteome</keyword>